<organism>
    <name type="scientific">Xenopus tropicalis</name>
    <name type="common">Western clawed frog</name>
    <name type="synonym">Silurana tropicalis</name>
    <dbReference type="NCBI Taxonomy" id="8364"/>
    <lineage>
        <taxon>Eukaryota</taxon>
        <taxon>Metazoa</taxon>
        <taxon>Chordata</taxon>
        <taxon>Craniata</taxon>
        <taxon>Vertebrata</taxon>
        <taxon>Euteleostomi</taxon>
        <taxon>Amphibia</taxon>
        <taxon>Batrachia</taxon>
        <taxon>Anura</taxon>
        <taxon>Pipoidea</taxon>
        <taxon>Pipidae</taxon>
        <taxon>Xenopodinae</taxon>
        <taxon>Xenopus</taxon>
        <taxon>Silurana</taxon>
    </lineage>
</organism>
<reference key="1">
    <citation type="submission" date="2006-10" db="EMBL/GenBank/DDBJ databases">
        <authorList>
            <consortium name="Sanger Xenopus tropicalis EST/cDNA project"/>
        </authorList>
    </citation>
    <scope>NUCLEOTIDE SEQUENCE [LARGE SCALE MRNA]</scope>
    <source>
        <tissue>Gastrula</tissue>
    </source>
</reference>
<keyword id="KW-1003">Cell membrane</keyword>
<keyword id="KW-0968">Cytoplasmic vesicle</keyword>
<keyword id="KW-0472">Membrane</keyword>
<keyword id="KW-1185">Reference proteome</keyword>
<keyword id="KW-0812">Transmembrane</keyword>
<keyword id="KW-1133">Transmembrane helix</keyword>
<feature type="chain" id="PRO_0000328798" description="Small cell adhesion glycoprotein homolog">
    <location>
        <begin position="1"/>
        <end position="90"/>
    </location>
</feature>
<feature type="topological domain" description="Extracellular" evidence="3">
    <location>
        <begin position="1"/>
        <end position="27"/>
    </location>
</feature>
<feature type="transmembrane region" description="Helical; Signal-anchor for type III membrane protein" evidence="3">
    <location>
        <begin position="28"/>
        <end position="48"/>
    </location>
</feature>
<feature type="topological domain" description="Cytoplasmic" evidence="3">
    <location>
        <begin position="49"/>
        <end position="90"/>
    </location>
</feature>
<accession>Q28F36</accession>
<proteinExistence type="inferred from homology"/>
<evidence type="ECO:0000250" key="1"/>
<evidence type="ECO:0000250" key="2">
    <source>
        <dbReference type="UniProtKB" id="Q0VAQ4"/>
    </source>
</evidence>
<evidence type="ECO:0000255" key="3"/>
<evidence type="ECO:0000305" key="4"/>
<name>SMAGP_XENTR</name>
<sequence length="90" mass="9858">MSILPTTDSVPEEAITKASGDVDGFEKAVVGGVIAAVFITLITVVVLITVYLYKHKGSYRTNENLEDVEASKTLQMEDSALTPEKKEYFM</sequence>
<gene>
    <name type="primary">smagp</name>
    <name type="ORF">TGas048n12.1</name>
</gene>
<protein>
    <recommendedName>
        <fullName>Small cell adhesion glycoprotein homolog</fullName>
    </recommendedName>
    <alternativeName>
        <fullName>Small transmembrane and glycosylated protein homolog</fullName>
    </alternativeName>
</protein>
<comment type="function">
    <text evidence="1">May play a role in epithelial cell-cell contacts.</text>
</comment>
<comment type="subcellular location">
    <subcellularLocation>
        <location evidence="2">Cell membrane</location>
        <topology evidence="3">Single-pass type III membrane protein</topology>
    </subcellularLocation>
    <subcellularLocation>
        <location evidence="2">Cytoplasmic vesicle membrane</location>
        <topology evidence="3">Single-pass type III membrane protein</topology>
    </subcellularLocation>
</comment>
<comment type="similarity">
    <text evidence="4">Belongs to the SMAGP family.</text>
</comment>
<dbReference type="EMBL" id="CR762192">
    <property type="protein sequence ID" value="CAJ81513.1"/>
    <property type="molecule type" value="mRNA"/>
</dbReference>
<dbReference type="SMR" id="Q28F36"/>
<dbReference type="FunCoup" id="Q28F36">
    <property type="interactions" value="65"/>
</dbReference>
<dbReference type="PaxDb" id="8364-ENSXETP00000053881"/>
<dbReference type="AGR" id="Xenbase:XB-GENE-5871173"/>
<dbReference type="InParanoid" id="Q28F36"/>
<dbReference type="Proteomes" id="UP000008143">
    <property type="component" value="Unplaced"/>
</dbReference>
<dbReference type="Bgee" id="ENSXETG00000037829">
    <property type="expression patterns" value="Expressed in ovary and 14 other cell types or tissues"/>
</dbReference>
<dbReference type="GO" id="GO:0030659">
    <property type="term" value="C:cytoplasmic vesicle membrane"/>
    <property type="evidence" value="ECO:0007669"/>
    <property type="project" value="UniProtKB-SubCell"/>
</dbReference>
<dbReference type="GO" id="GO:0005886">
    <property type="term" value="C:plasma membrane"/>
    <property type="evidence" value="ECO:0007669"/>
    <property type="project" value="UniProtKB-SubCell"/>
</dbReference>
<dbReference type="InterPro" id="IPR043243">
    <property type="entry name" value="SMAGP"/>
</dbReference>
<dbReference type="PANTHER" id="PTHR47394">
    <property type="entry name" value="SMALL CELL ADHESION GLYCOPROTEIN"/>
    <property type="match status" value="1"/>
</dbReference>
<dbReference type="PANTHER" id="PTHR47394:SF1">
    <property type="entry name" value="SMALL CELL ADHESION GLYCOPROTEIN"/>
    <property type="match status" value="1"/>
</dbReference>